<organism>
    <name type="scientific">Staphylococcus sp. (strain ST827)</name>
    <dbReference type="NCBI Taxonomy" id="126831"/>
    <lineage>
        <taxon>Bacteria</taxon>
        <taxon>Bacillati</taxon>
        <taxon>Bacillota</taxon>
        <taxon>Bacilli</taxon>
        <taxon>Bacillales</taxon>
        <taxon>Staphylococcaceae</taxon>
        <taxon>Staphylococcus</taxon>
    </lineage>
</organism>
<accession>Q55339</accession>
<sequence length="107" mass="11689">MPYIYLIISISTEVIGSAFLKSSEGFSKFIPSLGTIISFGICFYFLSKTMQHLPLNITYATWAGLGLVLTTVVSIIIFKEQINLITIVSIVLIIVGVVSLNIFGTSH</sequence>
<dbReference type="EMBL" id="Z37964">
    <property type="protein sequence ID" value="CAA86016.1"/>
    <property type="molecule type" value="Genomic_DNA"/>
</dbReference>
<dbReference type="PIR" id="S51693">
    <property type="entry name" value="S51693"/>
</dbReference>
<dbReference type="BMRB" id="Q55339"/>
<dbReference type="SMR" id="Q55339"/>
<dbReference type="GO" id="GO:0005886">
    <property type="term" value="C:plasma membrane"/>
    <property type="evidence" value="ECO:0007669"/>
    <property type="project" value="UniProtKB-SubCell"/>
</dbReference>
<dbReference type="GO" id="GO:0015199">
    <property type="term" value="F:amino-acid betaine transmembrane transporter activity"/>
    <property type="evidence" value="ECO:0007669"/>
    <property type="project" value="TreeGrafter"/>
</dbReference>
<dbReference type="GO" id="GO:0015297">
    <property type="term" value="F:antiporter activity"/>
    <property type="evidence" value="ECO:0007669"/>
    <property type="project" value="TreeGrafter"/>
</dbReference>
<dbReference type="GO" id="GO:0015220">
    <property type="term" value="F:choline transmembrane transporter activity"/>
    <property type="evidence" value="ECO:0007669"/>
    <property type="project" value="TreeGrafter"/>
</dbReference>
<dbReference type="GO" id="GO:0031460">
    <property type="term" value="P:glycine betaine transport"/>
    <property type="evidence" value="ECO:0007669"/>
    <property type="project" value="TreeGrafter"/>
</dbReference>
<dbReference type="FunFam" id="1.10.3730.20:FF:000001">
    <property type="entry name" value="Quaternary ammonium compound resistance transporter SugE"/>
    <property type="match status" value="1"/>
</dbReference>
<dbReference type="Gene3D" id="1.10.3730.20">
    <property type="match status" value="1"/>
</dbReference>
<dbReference type="InterPro" id="IPR000390">
    <property type="entry name" value="Small_drug/metabolite_transptr"/>
</dbReference>
<dbReference type="InterPro" id="IPR045324">
    <property type="entry name" value="Small_multidrug_res"/>
</dbReference>
<dbReference type="NCBIfam" id="NF000023">
    <property type="entry name" value="qac_SMR_C"/>
    <property type="match status" value="1"/>
</dbReference>
<dbReference type="NCBIfam" id="NF000384">
    <property type="entry name" value="QacCGHJ"/>
    <property type="match status" value="1"/>
</dbReference>
<dbReference type="PANTHER" id="PTHR30561:SF1">
    <property type="entry name" value="MULTIDRUG TRANSPORTER EMRE"/>
    <property type="match status" value="1"/>
</dbReference>
<dbReference type="PANTHER" id="PTHR30561">
    <property type="entry name" value="SMR FAMILY PROTON-DEPENDENT DRUG EFFLUX TRANSPORTER SUGE"/>
    <property type="match status" value="1"/>
</dbReference>
<dbReference type="Pfam" id="PF00893">
    <property type="entry name" value="Multi_Drug_Res"/>
    <property type="match status" value="1"/>
</dbReference>
<dbReference type="SUPFAM" id="SSF103481">
    <property type="entry name" value="Multidrug resistance efflux transporter EmrE"/>
    <property type="match status" value="1"/>
</dbReference>
<gene>
    <name evidence="4" type="primary">qacC</name>
</gene>
<keyword id="KW-1003">Cell membrane</keyword>
<keyword id="KW-0472">Membrane</keyword>
<keyword id="KW-0614">Plasmid</keyword>
<keyword id="KW-0812">Transmembrane</keyword>
<keyword id="KW-1133">Transmembrane helix</keyword>
<keyword id="KW-0813">Transport</keyword>
<protein>
    <recommendedName>
        <fullName>Quaternary ammonium compound-resistance protein QacC</fullName>
    </recommendedName>
    <alternativeName>
        <fullName>Quaternary ammonium determinant C</fullName>
    </alternativeName>
</protein>
<reference key="1">
    <citation type="journal article" date="1995" name="J. Appl. Bacteriol.">
        <title>Resistance to quaternary ammonium compounds in Staphylococcus spp. isolated from the food industry and nucleotide sequence of the resistance plasmid pST827.</title>
        <authorList>
            <person name="Heir E."/>
            <person name="Sundheim G."/>
            <person name="Holck A.L."/>
        </authorList>
    </citation>
    <scope>NUCLEOTIDE SEQUENCE [GENOMIC DNA]</scope>
    <scope>FUNCTION</scope>
</reference>
<comment type="function">
    <text evidence="3">Multidrug exporter. Is implicated for the resistance to bacteriocidal quaternary ammonium compounds.</text>
</comment>
<comment type="subcellular location">
    <subcellularLocation>
        <location evidence="1">Cell membrane</location>
        <topology evidence="2">Multi-pass membrane protein</topology>
    </subcellularLocation>
</comment>
<comment type="similarity">
    <text evidence="5">Belongs to the drug/metabolite transporter (DMT) superfamily. Small multidrug resistance (SMR) (TC 2.A.7.1) family.</text>
</comment>
<proteinExistence type="inferred from homology"/>
<evidence type="ECO:0000250" key="1">
    <source>
        <dbReference type="UniProtKB" id="P14319"/>
    </source>
</evidence>
<evidence type="ECO:0000255" key="2"/>
<evidence type="ECO:0000269" key="3">
    <source>
    </source>
</evidence>
<evidence type="ECO:0000303" key="4">
    <source>
    </source>
</evidence>
<evidence type="ECO:0000305" key="5"/>
<feature type="chain" id="PRO_0000108084" description="Quaternary ammonium compound-resistance protein QacC">
    <location>
        <begin position="1"/>
        <end position="107"/>
    </location>
</feature>
<feature type="transmembrane region" description="Helical" evidence="2">
    <location>
        <begin position="26"/>
        <end position="46"/>
    </location>
</feature>
<feature type="transmembrane region" description="Helical" evidence="2">
    <location>
        <begin position="57"/>
        <end position="77"/>
    </location>
</feature>
<feature type="transmembrane region" description="Helical" evidence="2">
    <location>
        <begin position="84"/>
        <end position="104"/>
    </location>
</feature>
<name>QACC_STASS</name>
<geneLocation type="plasmid">
    <name>pST827</name>
</geneLocation>